<name>NUOI_BEII9</name>
<comment type="function">
    <text evidence="1">NDH-1 shuttles electrons from NADH, via FMN and iron-sulfur (Fe-S) centers, to quinones in the respiratory chain. The immediate electron acceptor for the enzyme in this species is believed to be ubiquinone. Couples the redox reaction to proton translocation (for every two electrons transferred, four hydrogen ions are translocated across the cytoplasmic membrane), and thus conserves the redox energy in a proton gradient.</text>
</comment>
<comment type="catalytic activity">
    <reaction evidence="1">
        <text>a quinone + NADH + 5 H(+)(in) = a quinol + NAD(+) + 4 H(+)(out)</text>
        <dbReference type="Rhea" id="RHEA:57888"/>
        <dbReference type="ChEBI" id="CHEBI:15378"/>
        <dbReference type="ChEBI" id="CHEBI:24646"/>
        <dbReference type="ChEBI" id="CHEBI:57540"/>
        <dbReference type="ChEBI" id="CHEBI:57945"/>
        <dbReference type="ChEBI" id="CHEBI:132124"/>
    </reaction>
</comment>
<comment type="cofactor">
    <cofactor evidence="1">
        <name>[4Fe-4S] cluster</name>
        <dbReference type="ChEBI" id="CHEBI:49883"/>
    </cofactor>
    <text evidence="1">Binds 2 [4Fe-4S] clusters per subunit.</text>
</comment>
<comment type="subunit">
    <text evidence="1">NDH-1 is composed of 14 different subunits. Subunits NuoA, H, J, K, L, M, N constitute the membrane sector of the complex.</text>
</comment>
<comment type="subcellular location">
    <subcellularLocation>
        <location evidence="1">Cell inner membrane</location>
        <topology evidence="1">Peripheral membrane protein</topology>
    </subcellularLocation>
</comment>
<comment type="similarity">
    <text evidence="1">Belongs to the complex I 23 kDa subunit family.</text>
</comment>
<reference key="1">
    <citation type="journal article" date="2010" name="J. Bacteriol.">
        <title>Complete genome sequence of Beijerinckia indica subsp. indica.</title>
        <authorList>
            <person name="Tamas I."/>
            <person name="Dedysh S.N."/>
            <person name="Liesack W."/>
            <person name="Stott M.B."/>
            <person name="Alam M."/>
            <person name="Murrell J.C."/>
            <person name="Dunfield P.F."/>
        </authorList>
    </citation>
    <scope>NUCLEOTIDE SEQUENCE [LARGE SCALE GENOMIC DNA]</scope>
    <source>
        <strain>ATCC 9039 / DSM 1715 / NCIMB 8712</strain>
    </source>
</reference>
<organism>
    <name type="scientific">Beijerinckia indica subsp. indica (strain ATCC 9039 / DSM 1715 / NCIMB 8712)</name>
    <dbReference type="NCBI Taxonomy" id="395963"/>
    <lineage>
        <taxon>Bacteria</taxon>
        <taxon>Pseudomonadati</taxon>
        <taxon>Pseudomonadota</taxon>
        <taxon>Alphaproteobacteria</taxon>
        <taxon>Hyphomicrobiales</taxon>
        <taxon>Beijerinckiaceae</taxon>
        <taxon>Beijerinckia</taxon>
    </lineage>
</organism>
<dbReference type="EC" id="7.1.1.-" evidence="1"/>
<dbReference type="EMBL" id="CP001016">
    <property type="protein sequence ID" value="ACB96001.1"/>
    <property type="molecule type" value="Genomic_DNA"/>
</dbReference>
<dbReference type="RefSeq" id="WP_012385354.1">
    <property type="nucleotide sequence ID" value="NC_010581.1"/>
</dbReference>
<dbReference type="SMR" id="B2IHV8"/>
<dbReference type="STRING" id="395963.Bind_2390"/>
<dbReference type="KEGG" id="bid:Bind_2390"/>
<dbReference type="eggNOG" id="COG1143">
    <property type="taxonomic scope" value="Bacteria"/>
</dbReference>
<dbReference type="HOGENOM" id="CLU_067218_5_1_5"/>
<dbReference type="OrthoDB" id="9808559at2"/>
<dbReference type="Proteomes" id="UP000001695">
    <property type="component" value="Chromosome"/>
</dbReference>
<dbReference type="GO" id="GO:0005886">
    <property type="term" value="C:plasma membrane"/>
    <property type="evidence" value="ECO:0007669"/>
    <property type="project" value="UniProtKB-SubCell"/>
</dbReference>
<dbReference type="GO" id="GO:0051539">
    <property type="term" value="F:4 iron, 4 sulfur cluster binding"/>
    <property type="evidence" value="ECO:0007669"/>
    <property type="project" value="UniProtKB-KW"/>
</dbReference>
<dbReference type="GO" id="GO:0005506">
    <property type="term" value="F:iron ion binding"/>
    <property type="evidence" value="ECO:0007669"/>
    <property type="project" value="UniProtKB-UniRule"/>
</dbReference>
<dbReference type="GO" id="GO:0050136">
    <property type="term" value="F:NADH:ubiquinone reductase (non-electrogenic) activity"/>
    <property type="evidence" value="ECO:0007669"/>
    <property type="project" value="UniProtKB-UniRule"/>
</dbReference>
<dbReference type="GO" id="GO:0048038">
    <property type="term" value="F:quinone binding"/>
    <property type="evidence" value="ECO:0007669"/>
    <property type="project" value="UniProtKB-KW"/>
</dbReference>
<dbReference type="GO" id="GO:0009060">
    <property type="term" value="P:aerobic respiration"/>
    <property type="evidence" value="ECO:0007669"/>
    <property type="project" value="TreeGrafter"/>
</dbReference>
<dbReference type="FunFam" id="3.30.70.3270:FF:000001">
    <property type="entry name" value="NADH-quinone oxidoreductase subunit I 1"/>
    <property type="match status" value="1"/>
</dbReference>
<dbReference type="Gene3D" id="3.30.70.3270">
    <property type="match status" value="1"/>
</dbReference>
<dbReference type="HAMAP" id="MF_01351">
    <property type="entry name" value="NDH1_NuoI"/>
    <property type="match status" value="1"/>
</dbReference>
<dbReference type="InterPro" id="IPR017896">
    <property type="entry name" value="4Fe4S_Fe-S-bd"/>
</dbReference>
<dbReference type="InterPro" id="IPR017900">
    <property type="entry name" value="4Fe4S_Fe_S_CS"/>
</dbReference>
<dbReference type="InterPro" id="IPR010226">
    <property type="entry name" value="NADH_quinone_OxRdtase_chainI"/>
</dbReference>
<dbReference type="NCBIfam" id="TIGR01971">
    <property type="entry name" value="NuoI"/>
    <property type="match status" value="1"/>
</dbReference>
<dbReference type="NCBIfam" id="NF004538">
    <property type="entry name" value="PRK05888.1-4"/>
    <property type="match status" value="1"/>
</dbReference>
<dbReference type="NCBIfam" id="NF004539">
    <property type="entry name" value="PRK05888.1-5"/>
    <property type="match status" value="1"/>
</dbReference>
<dbReference type="PANTHER" id="PTHR10849:SF20">
    <property type="entry name" value="NADH DEHYDROGENASE [UBIQUINONE] IRON-SULFUR PROTEIN 8, MITOCHONDRIAL"/>
    <property type="match status" value="1"/>
</dbReference>
<dbReference type="PANTHER" id="PTHR10849">
    <property type="entry name" value="NADH DEHYDROGENASE UBIQUINONE IRON-SULFUR PROTEIN 8, MITOCHONDRIAL"/>
    <property type="match status" value="1"/>
</dbReference>
<dbReference type="Pfam" id="PF12838">
    <property type="entry name" value="Fer4_7"/>
    <property type="match status" value="1"/>
</dbReference>
<dbReference type="SUPFAM" id="SSF54862">
    <property type="entry name" value="4Fe-4S ferredoxins"/>
    <property type="match status" value="1"/>
</dbReference>
<dbReference type="PROSITE" id="PS00198">
    <property type="entry name" value="4FE4S_FER_1"/>
    <property type="match status" value="2"/>
</dbReference>
<dbReference type="PROSITE" id="PS51379">
    <property type="entry name" value="4FE4S_FER_2"/>
    <property type="match status" value="2"/>
</dbReference>
<protein>
    <recommendedName>
        <fullName evidence="1">NADH-quinone oxidoreductase subunit I</fullName>
        <ecNumber evidence="1">7.1.1.-</ecNumber>
    </recommendedName>
    <alternativeName>
        <fullName evidence="1">NADH dehydrogenase I subunit I</fullName>
    </alternativeName>
    <alternativeName>
        <fullName evidence="1">NDH-1 subunit I</fullName>
    </alternativeName>
</protein>
<sequence>MRLDSAAKALFLKEFVGAFALSMRYFFKPRPTLNYPHEKNPQSPRYRGEHALRRYPNGEERCIACKLCEAICPAKAITIEAGPRRNDGTRRTTRYDIDMVKCIYCGFCQEACPVDAIVEGPNAEFAVETREELYYDKDRLLQNGARWEREIARNIALDAPYR</sequence>
<proteinExistence type="inferred from homology"/>
<keyword id="KW-0004">4Fe-4S</keyword>
<keyword id="KW-0997">Cell inner membrane</keyword>
<keyword id="KW-1003">Cell membrane</keyword>
<keyword id="KW-0408">Iron</keyword>
<keyword id="KW-0411">Iron-sulfur</keyword>
<keyword id="KW-0472">Membrane</keyword>
<keyword id="KW-0479">Metal-binding</keyword>
<keyword id="KW-0520">NAD</keyword>
<keyword id="KW-0874">Quinone</keyword>
<keyword id="KW-1185">Reference proteome</keyword>
<keyword id="KW-0677">Repeat</keyword>
<keyword id="KW-1278">Translocase</keyword>
<keyword id="KW-0830">Ubiquinone</keyword>
<gene>
    <name evidence="1" type="primary">nuoI</name>
    <name type="ordered locus">Bind_2390</name>
</gene>
<feature type="chain" id="PRO_1000214846" description="NADH-quinone oxidoreductase subunit I">
    <location>
        <begin position="1"/>
        <end position="162"/>
    </location>
</feature>
<feature type="domain" description="4Fe-4S ferredoxin-type 1" evidence="1">
    <location>
        <begin position="52"/>
        <end position="82"/>
    </location>
</feature>
<feature type="domain" description="4Fe-4S ferredoxin-type 2" evidence="1">
    <location>
        <begin position="93"/>
        <end position="122"/>
    </location>
</feature>
<feature type="binding site" evidence="1">
    <location>
        <position position="62"/>
    </location>
    <ligand>
        <name>[4Fe-4S] cluster</name>
        <dbReference type="ChEBI" id="CHEBI:49883"/>
        <label>1</label>
    </ligand>
</feature>
<feature type="binding site" evidence="1">
    <location>
        <position position="65"/>
    </location>
    <ligand>
        <name>[4Fe-4S] cluster</name>
        <dbReference type="ChEBI" id="CHEBI:49883"/>
        <label>1</label>
    </ligand>
</feature>
<feature type="binding site" evidence="1">
    <location>
        <position position="68"/>
    </location>
    <ligand>
        <name>[4Fe-4S] cluster</name>
        <dbReference type="ChEBI" id="CHEBI:49883"/>
        <label>1</label>
    </ligand>
</feature>
<feature type="binding site" evidence="1">
    <location>
        <position position="72"/>
    </location>
    <ligand>
        <name>[4Fe-4S] cluster</name>
        <dbReference type="ChEBI" id="CHEBI:49883"/>
        <label>2</label>
    </ligand>
</feature>
<feature type="binding site" evidence="1">
    <location>
        <position position="102"/>
    </location>
    <ligand>
        <name>[4Fe-4S] cluster</name>
        <dbReference type="ChEBI" id="CHEBI:49883"/>
        <label>2</label>
    </ligand>
</feature>
<feature type="binding site" evidence="1">
    <location>
        <position position="105"/>
    </location>
    <ligand>
        <name>[4Fe-4S] cluster</name>
        <dbReference type="ChEBI" id="CHEBI:49883"/>
        <label>2</label>
    </ligand>
</feature>
<feature type="binding site" evidence="1">
    <location>
        <position position="108"/>
    </location>
    <ligand>
        <name>[4Fe-4S] cluster</name>
        <dbReference type="ChEBI" id="CHEBI:49883"/>
        <label>2</label>
    </ligand>
</feature>
<feature type="binding site" evidence="1">
    <location>
        <position position="112"/>
    </location>
    <ligand>
        <name>[4Fe-4S] cluster</name>
        <dbReference type="ChEBI" id="CHEBI:49883"/>
        <label>1</label>
    </ligand>
</feature>
<accession>B2IHV8</accession>
<evidence type="ECO:0000255" key="1">
    <source>
        <dbReference type="HAMAP-Rule" id="MF_01351"/>
    </source>
</evidence>